<comment type="function">
    <text evidence="1">Terminal reductase during anaerobic growth on various sulfoxide and N-oxide compounds.</text>
</comment>
<comment type="cofactor">
    <cofactor evidence="4">
        <name>[4Fe-4S] cluster</name>
        <dbReference type="ChEBI" id="CHEBI:49883"/>
    </cofactor>
    <text evidence="4">Binds 1 [4Fe-4S] cluster.</text>
</comment>
<comment type="cofactor">
    <cofactor evidence="1">
        <name>Mo-bis(molybdopterin guanine dinucleotide)</name>
        <dbReference type="ChEBI" id="CHEBI:60539"/>
    </cofactor>
    <text evidence="1">Binds 1 molybdenum-bis(molybdopterin guanine dinucleotide) (Mo-bis-MGD) cofactor per subunit.</text>
</comment>
<comment type="subunit">
    <text evidence="4">The complex consists of three subunits: YnfF, the reductase; YnfG, an electron transfer protein, and YnfH, a membrane anchor protein.</text>
</comment>
<comment type="interaction">
    <interactant intactId="EBI-6406285">
        <id>P77783</id>
    </interactant>
    <interactant intactId="EBI-4406374">
        <id>P69853</id>
        <label>dmsD</label>
    </interactant>
    <organismsDiffer>false</organismsDiffer>
    <experiments>3</experiments>
</comment>
<comment type="subcellular location">
    <subcellularLocation>
        <location evidence="1">Cell membrane</location>
        <topology evidence="1">Peripheral membrane protein</topology>
        <orientation evidence="1">Cytoplasmic side</orientation>
    </subcellularLocation>
</comment>
<comment type="PTM">
    <text>Exported by the Tat system. The position of the signal peptide cleavage has not been experimentally proven. Can also be exported by the Sec system.</text>
</comment>
<comment type="similarity">
    <text evidence="4">Belongs to the prokaryotic molybdopterin-containing oxidoreductase family.</text>
</comment>
<organism>
    <name type="scientific">Escherichia coli (strain K12)</name>
    <dbReference type="NCBI Taxonomy" id="83333"/>
    <lineage>
        <taxon>Bacteria</taxon>
        <taxon>Pseudomonadati</taxon>
        <taxon>Pseudomonadota</taxon>
        <taxon>Gammaproteobacteria</taxon>
        <taxon>Enterobacterales</taxon>
        <taxon>Enterobacteriaceae</taxon>
        <taxon>Escherichia</taxon>
    </lineage>
</organism>
<dbReference type="EC" id="1.8.99.-"/>
<dbReference type="EMBL" id="U00096">
    <property type="protein sequence ID" value="AAC74660.4"/>
    <property type="molecule type" value="Genomic_DNA"/>
</dbReference>
<dbReference type="EMBL" id="AP009048">
    <property type="protein sequence ID" value="BAA15312.2"/>
    <property type="molecule type" value="Genomic_DNA"/>
</dbReference>
<dbReference type="PIR" id="F64914">
    <property type="entry name" value="F64914"/>
</dbReference>
<dbReference type="RefSeq" id="NP_416105.4">
    <property type="nucleotide sequence ID" value="NC_000913.3"/>
</dbReference>
<dbReference type="RefSeq" id="WP_001340362.1">
    <property type="nucleotide sequence ID" value="NZ_SSZK01000001.1"/>
</dbReference>
<dbReference type="SMR" id="P77783"/>
<dbReference type="BioGRID" id="4259130">
    <property type="interactions" value="13"/>
</dbReference>
<dbReference type="ComplexPortal" id="CPX-6019">
    <property type="entry name" value="Putative dimethyl sulfoxide reductase"/>
</dbReference>
<dbReference type="DIP" id="DIP-12766N"/>
<dbReference type="FunCoup" id="P77783">
    <property type="interactions" value="67"/>
</dbReference>
<dbReference type="IntAct" id="P77783">
    <property type="interactions" value="2"/>
</dbReference>
<dbReference type="STRING" id="511145.b1588"/>
<dbReference type="TCDB" id="5.A.3.3.1">
    <property type="family name" value="the prokaryotic molybdopterin-containing oxidoreductase (pmo) family"/>
</dbReference>
<dbReference type="jPOST" id="P77783"/>
<dbReference type="PaxDb" id="511145-b1588"/>
<dbReference type="EnsemblBacteria" id="AAC74660">
    <property type="protein sequence ID" value="AAC74660"/>
    <property type="gene ID" value="b1588"/>
</dbReference>
<dbReference type="GeneID" id="75171646"/>
<dbReference type="GeneID" id="945268"/>
<dbReference type="KEGG" id="ecj:JW5260"/>
<dbReference type="KEGG" id="eco:b1588"/>
<dbReference type="PATRIC" id="fig|511145.12.peg.1659"/>
<dbReference type="EchoBASE" id="EB3605"/>
<dbReference type="eggNOG" id="COG0243">
    <property type="taxonomic scope" value="Bacteria"/>
</dbReference>
<dbReference type="HOGENOM" id="CLU_000422_13_3_6"/>
<dbReference type="InParanoid" id="P77783"/>
<dbReference type="OMA" id="HYSDYST"/>
<dbReference type="OrthoDB" id="9815647at2"/>
<dbReference type="PhylomeDB" id="P77783"/>
<dbReference type="BioCyc" id="EcoCyc:G6846-MONOMER"/>
<dbReference type="BioCyc" id="MetaCyc:G6846-MONOMER"/>
<dbReference type="PRO" id="PR:P77783"/>
<dbReference type="Proteomes" id="UP000000625">
    <property type="component" value="Chromosome"/>
</dbReference>
<dbReference type="GO" id="GO:0030288">
    <property type="term" value="C:outer membrane-bounded periplasmic space"/>
    <property type="evidence" value="ECO:0000318"/>
    <property type="project" value="GO_Central"/>
</dbReference>
<dbReference type="GO" id="GO:1990204">
    <property type="term" value="C:oxidoreductase complex"/>
    <property type="evidence" value="ECO:0000303"/>
    <property type="project" value="ComplexPortal"/>
</dbReference>
<dbReference type="GO" id="GO:0005886">
    <property type="term" value="C:plasma membrane"/>
    <property type="evidence" value="ECO:0007669"/>
    <property type="project" value="UniProtKB-SubCell"/>
</dbReference>
<dbReference type="GO" id="GO:0051539">
    <property type="term" value="F:4 iron, 4 sulfur cluster binding"/>
    <property type="evidence" value="ECO:0007669"/>
    <property type="project" value="UniProtKB-KW"/>
</dbReference>
<dbReference type="GO" id="GO:0009389">
    <property type="term" value="F:dimethyl sulfoxide reductase activity"/>
    <property type="evidence" value="ECO:0007669"/>
    <property type="project" value="InterPro"/>
</dbReference>
<dbReference type="GO" id="GO:0009055">
    <property type="term" value="F:electron transfer activity"/>
    <property type="evidence" value="ECO:0000318"/>
    <property type="project" value="GO_Central"/>
</dbReference>
<dbReference type="GO" id="GO:0030151">
    <property type="term" value="F:molybdenum ion binding"/>
    <property type="evidence" value="ECO:0000318"/>
    <property type="project" value="GO_Central"/>
</dbReference>
<dbReference type="GO" id="GO:0043546">
    <property type="term" value="F:molybdopterin cofactor binding"/>
    <property type="evidence" value="ECO:0007669"/>
    <property type="project" value="InterPro"/>
</dbReference>
<dbReference type="GO" id="GO:0033797">
    <property type="term" value="F:selenate reductase activity"/>
    <property type="evidence" value="ECO:0000315"/>
    <property type="project" value="EcoCyc"/>
</dbReference>
<dbReference type="GO" id="GO:0009061">
    <property type="term" value="P:anaerobic respiration"/>
    <property type="evidence" value="ECO:0000318"/>
    <property type="project" value="GO_Central"/>
</dbReference>
<dbReference type="CDD" id="cd02794">
    <property type="entry name" value="MopB_CT_DmsA-EC"/>
    <property type="match status" value="1"/>
</dbReference>
<dbReference type="CDD" id="cd02770">
    <property type="entry name" value="MopB_DmsA-EC"/>
    <property type="match status" value="1"/>
</dbReference>
<dbReference type="FunFam" id="2.40.40.20:FF:000010">
    <property type="entry name" value="Anaerobic dimethyl sulfoxide reductase subunit A"/>
    <property type="match status" value="1"/>
</dbReference>
<dbReference type="FunFam" id="3.40.50.12440:FF:000003">
    <property type="entry name" value="Anaerobic dimethyl sulfoxide reductase subunit A"/>
    <property type="match status" value="1"/>
</dbReference>
<dbReference type="FunFam" id="3.40.50.12440:FF:000002">
    <property type="entry name" value="Anaerobic dimethyl sulfoxide reductase, A subunit"/>
    <property type="match status" value="1"/>
</dbReference>
<dbReference type="FunFam" id="3.40.50.740:FF:000005">
    <property type="entry name" value="Anaerobic dimethyl sulfoxide reductase, A subunit"/>
    <property type="match status" value="1"/>
</dbReference>
<dbReference type="FunFam" id="3.40.228.10:FF:000004">
    <property type="entry name" value="Dimethyl sulfoxide reductase subunit A"/>
    <property type="match status" value="1"/>
</dbReference>
<dbReference type="Gene3D" id="2.40.40.20">
    <property type="match status" value="1"/>
</dbReference>
<dbReference type="Gene3D" id="3.40.50.12440">
    <property type="match status" value="2"/>
</dbReference>
<dbReference type="Gene3D" id="3.40.50.740">
    <property type="match status" value="1"/>
</dbReference>
<dbReference type="Gene3D" id="3.40.228.10">
    <property type="entry name" value="Dimethylsulfoxide Reductase, domain 2"/>
    <property type="match status" value="1"/>
</dbReference>
<dbReference type="InterPro" id="IPR011888">
    <property type="entry name" value="Anaer_DMSO_reductase"/>
</dbReference>
<dbReference type="InterPro" id="IPR009010">
    <property type="entry name" value="Asp_de-COase-like_dom_sf"/>
</dbReference>
<dbReference type="InterPro" id="IPR054842">
    <property type="entry name" value="DMSO_reductase_YnfF"/>
</dbReference>
<dbReference type="InterPro" id="IPR006657">
    <property type="entry name" value="MoPterin_dinucl-bd_dom"/>
</dbReference>
<dbReference type="InterPro" id="IPR006656">
    <property type="entry name" value="Mopterin_OxRdtase"/>
</dbReference>
<dbReference type="InterPro" id="IPR006963">
    <property type="entry name" value="Mopterin_OxRdtase_4Fe-4S_dom"/>
</dbReference>
<dbReference type="InterPro" id="IPR006655">
    <property type="entry name" value="Mopterin_OxRdtase_prok_CS"/>
</dbReference>
<dbReference type="InterPro" id="IPR027467">
    <property type="entry name" value="MopterinOxRdtase_cofactor_BS"/>
</dbReference>
<dbReference type="InterPro" id="IPR050612">
    <property type="entry name" value="Prok_Mopterin_Oxidored"/>
</dbReference>
<dbReference type="InterPro" id="IPR006311">
    <property type="entry name" value="TAT_signal"/>
</dbReference>
<dbReference type="NCBIfam" id="TIGR02166">
    <property type="entry name" value="dmsA_ynfE"/>
    <property type="match status" value="1"/>
</dbReference>
<dbReference type="NCBIfam" id="NF041884">
    <property type="entry name" value="selenate_YnfF"/>
    <property type="match status" value="1"/>
</dbReference>
<dbReference type="PANTHER" id="PTHR43742:SF1">
    <property type="entry name" value="DIMETHYL SULFOXIDE REDUCTASE CHAIN YNFF-RELATED"/>
    <property type="match status" value="1"/>
</dbReference>
<dbReference type="PANTHER" id="PTHR43742">
    <property type="entry name" value="TRIMETHYLAMINE-N-OXIDE REDUCTASE"/>
    <property type="match status" value="1"/>
</dbReference>
<dbReference type="Pfam" id="PF04879">
    <property type="entry name" value="Molybdop_Fe4S4"/>
    <property type="match status" value="1"/>
</dbReference>
<dbReference type="Pfam" id="PF00384">
    <property type="entry name" value="Molybdopterin"/>
    <property type="match status" value="1"/>
</dbReference>
<dbReference type="Pfam" id="PF01568">
    <property type="entry name" value="Molydop_binding"/>
    <property type="match status" value="1"/>
</dbReference>
<dbReference type="SMART" id="SM00926">
    <property type="entry name" value="Molybdop_Fe4S4"/>
    <property type="match status" value="1"/>
</dbReference>
<dbReference type="SUPFAM" id="SSF50692">
    <property type="entry name" value="ADC-like"/>
    <property type="match status" value="1"/>
</dbReference>
<dbReference type="SUPFAM" id="SSF53706">
    <property type="entry name" value="Formate dehydrogenase/DMSO reductase, domains 1-3"/>
    <property type="match status" value="1"/>
</dbReference>
<dbReference type="PROSITE" id="PS51669">
    <property type="entry name" value="4FE4S_MOW_BIS_MGD"/>
    <property type="match status" value="1"/>
</dbReference>
<dbReference type="PROSITE" id="PS00551">
    <property type="entry name" value="MOLYBDOPTERIN_PROK_1"/>
    <property type="match status" value="1"/>
</dbReference>
<dbReference type="PROSITE" id="PS00932">
    <property type="entry name" value="MOLYBDOPTERIN_PROK_3"/>
    <property type="match status" value="1"/>
</dbReference>
<dbReference type="PROSITE" id="PS51318">
    <property type="entry name" value="TAT"/>
    <property type="match status" value="1"/>
</dbReference>
<accession>P77783</accession>
<proteinExistence type="evidence at protein level"/>
<gene>
    <name type="primary">ynfF</name>
    <name type="ordered locus">b1588</name>
    <name type="ordered locus">JW5260</name>
</gene>
<sequence length="807" mass="89987">MKIHTTEALMKAEISRRSLMKTSALGSLALASSAFTLPFSQMVRAAEAPVEEKAVWSSCTVNCGSRCLLRLHVKDDTVYWVESDTTGDDVYGNHQVRACLRGRSIRRRMNHPDRLKYPMKRVGKRGEGKFERISWDEALDTISDNLRRILKDYGNEAVHVLYGTGVDGGNITNSNVPYRLMNSCGGFLSRYGSYSTAQISAAMSYMFGANDGNSPDDIANTKLVVMFGNNPAETRMSGGGVTYYVEQARERSNARMIVIDPRYNDTAAGREDEWLPIRPGTDGALACAIAWVLITENMVDQPFLDKYCVGYDEKTLPANAPRNAHYKAYILGEGPDGIAKTPEWAAKITSIPAEKIIQLAREIGSAKPAYICQGWGPQRHSNGEQTSRAIAMLSVLTGNVGINGGNSGVREGSWDLGVEWFPMLENPVKTQISVFTWTDAIDHGTEMTATRDGVRGKEKLDVPIKFLWCYASNTLINQHGDINHTHEVLQDDSKCEMIVGIDHFMTASAKYCDILLPDLMPTEQEDLISHESAGNMGYVILAQPATSAKFERKPIYWMLSEVAKRLGPDVYQTFTEGRSQHEWIKYLHAKTKERNPEMPDYEEMKTTGIFKKKCPEEHYVAFRAFREDPQANPLKTPSGKIEIYSERLAKIADTWELKKDEIIHPLPAYTPGFDGWDDPLRKTYPLQLTGFHYKARTHSSYGNIDVLQQACPQEVWINPIDAQARGIRHGDTVRVFNNNGEMLIAAKVTPRILPGVTAIGQGAWLKADMFGDRVDHGGSINILTSHRPSPLAKGNPSHSNLVQIEKV</sequence>
<feature type="signal peptide" description="Tat-type signal" evidence="2">
    <location>
        <begin position="1"/>
        <end position="45"/>
    </location>
</feature>
<feature type="chain" id="PRO_0000019148" description="Probable dimethyl sulfoxide reductase chain YnfF">
    <location>
        <begin position="46"/>
        <end position="807"/>
    </location>
</feature>
<feature type="domain" description="4Fe-4S Mo/W bis-MGD-type" evidence="3">
    <location>
        <begin position="52"/>
        <end position="113"/>
    </location>
</feature>
<feature type="binding site" evidence="3">
    <location>
        <position position="59"/>
    </location>
    <ligand>
        <name>[4Fe-4S] cluster</name>
        <dbReference type="ChEBI" id="CHEBI:49883"/>
    </ligand>
</feature>
<feature type="binding site" evidence="3">
    <location>
        <position position="63"/>
    </location>
    <ligand>
        <name>[4Fe-4S] cluster</name>
        <dbReference type="ChEBI" id="CHEBI:49883"/>
    </ligand>
</feature>
<feature type="binding site" evidence="3">
    <location>
        <position position="67"/>
    </location>
    <ligand>
        <name>[4Fe-4S] cluster</name>
        <dbReference type="ChEBI" id="CHEBI:49883"/>
    </ligand>
</feature>
<feature type="binding site" evidence="3">
    <location>
        <position position="99"/>
    </location>
    <ligand>
        <name>[4Fe-4S] cluster</name>
        <dbReference type="ChEBI" id="CHEBI:49883"/>
    </ligand>
</feature>
<feature type="binding site" evidence="1">
    <location>
        <position position="195"/>
    </location>
    <ligand>
        <name>Mo-bis(molybdopterin guanine dinucleotide)</name>
        <dbReference type="ChEBI" id="CHEBI:60539"/>
    </ligand>
    <ligandPart>
        <name>Mo</name>
        <dbReference type="ChEBI" id="CHEBI:28685"/>
    </ligandPart>
</feature>
<name>YNFF_ECOLI</name>
<protein>
    <recommendedName>
        <fullName>Probable dimethyl sulfoxide reductase chain YnfF</fullName>
        <shortName>DMSO reductase</shortName>
        <ecNumber>1.8.99.-</ecNumber>
    </recommendedName>
</protein>
<evidence type="ECO:0000250" key="1"/>
<evidence type="ECO:0000255" key="2">
    <source>
        <dbReference type="PROSITE-ProRule" id="PRU00648"/>
    </source>
</evidence>
<evidence type="ECO:0000255" key="3">
    <source>
        <dbReference type="PROSITE-ProRule" id="PRU01004"/>
    </source>
</evidence>
<evidence type="ECO:0000305" key="4"/>
<reference key="1">
    <citation type="journal article" date="1996" name="DNA Res.">
        <title>A 570-kb DNA sequence of the Escherichia coli K-12 genome corresponding to the 28.0-40.1 min region on the linkage map.</title>
        <authorList>
            <person name="Aiba H."/>
            <person name="Baba T."/>
            <person name="Fujita K."/>
            <person name="Hayashi K."/>
            <person name="Inada T."/>
            <person name="Isono K."/>
            <person name="Itoh T."/>
            <person name="Kasai H."/>
            <person name="Kashimoto K."/>
            <person name="Kimura S."/>
            <person name="Kitakawa M."/>
            <person name="Kitagawa M."/>
            <person name="Makino K."/>
            <person name="Miki T."/>
            <person name="Mizobuchi K."/>
            <person name="Mori H."/>
            <person name="Mori T."/>
            <person name="Motomura K."/>
            <person name="Nakade S."/>
            <person name="Nakamura Y."/>
            <person name="Nashimoto H."/>
            <person name="Nishio Y."/>
            <person name="Oshima T."/>
            <person name="Saito N."/>
            <person name="Sampei G."/>
            <person name="Seki Y."/>
            <person name="Sivasundaram S."/>
            <person name="Tagami H."/>
            <person name="Takeda J."/>
            <person name="Takemoto K."/>
            <person name="Takeuchi Y."/>
            <person name="Wada C."/>
            <person name="Yamamoto Y."/>
            <person name="Horiuchi T."/>
        </authorList>
    </citation>
    <scope>NUCLEOTIDE SEQUENCE [LARGE SCALE GENOMIC DNA]</scope>
    <source>
        <strain>K12 / W3110 / ATCC 27325 / DSM 5911</strain>
    </source>
</reference>
<reference key="2">
    <citation type="journal article" date="1997" name="Science">
        <title>The complete genome sequence of Escherichia coli K-12.</title>
        <authorList>
            <person name="Blattner F.R."/>
            <person name="Plunkett G. III"/>
            <person name="Bloch C.A."/>
            <person name="Perna N.T."/>
            <person name="Burland V."/>
            <person name="Riley M."/>
            <person name="Collado-Vides J."/>
            <person name="Glasner J.D."/>
            <person name="Rode C.K."/>
            <person name="Mayhew G.F."/>
            <person name="Gregor J."/>
            <person name="Davis N.W."/>
            <person name="Kirkpatrick H.A."/>
            <person name="Goeden M.A."/>
            <person name="Rose D.J."/>
            <person name="Mau B."/>
            <person name="Shao Y."/>
        </authorList>
    </citation>
    <scope>NUCLEOTIDE SEQUENCE [LARGE SCALE GENOMIC DNA]</scope>
    <source>
        <strain>K12 / MG1655 / ATCC 47076</strain>
    </source>
</reference>
<reference key="3">
    <citation type="journal article" date="2006" name="Mol. Syst. Biol.">
        <title>Highly accurate genome sequences of Escherichia coli K-12 strains MG1655 and W3110.</title>
        <authorList>
            <person name="Hayashi K."/>
            <person name="Morooka N."/>
            <person name="Yamamoto Y."/>
            <person name="Fujita K."/>
            <person name="Isono K."/>
            <person name="Choi S."/>
            <person name="Ohtsubo E."/>
            <person name="Baba T."/>
            <person name="Wanner B.L."/>
            <person name="Mori H."/>
            <person name="Horiuchi T."/>
        </authorList>
    </citation>
    <scope>NUCLEOTIDE SEQUENCE [LARGE SCALE GENOMIC DNA]</scope>
    <source>
        <strain>K12 / W3110 / ATCC 27325 / DSM 5911</strain>
    </source>
</reference>
<reference key="4">
    <citation type="journal article" date="2007" name="J. Biol. Chem.">
        <title>Export pathway selectivity of Escherichia coli twin arginine translocation signal peptides.</title>
        <authorList>
            <person name="Tullman-Ercek D."/>
            <person name="DeLisa M.P."/>
            <person name="Kawarasaki Y."/>
            <person name="Iranpour P."/>
            <person name="Ribnicky B."/>
            <person name="Palmer T."/>
            <person name="Georgiou G."/>
        </authorList>
    </citation>
    <scope>EXPORT VIA THE TAT-SYSTEM AND THE SEC-SYSTEM</scope>
</reference>
<keyword id="KW-0004">4Fe-4S</keyword>
<keyword id="KW-1003">Cell membrane</keyword>
<keyword id="KW-0408">Iron</keyword>
<keyword id="KW-0411">Iron-sulfur</keyword>
<keyword id="KW-0472">Membrane</keyword>
<keyword id="KW-0479">Metal-binding</keyword>
<keyword id="KW-0500">Molybdenum</keyword>
<keyword id="KW-0560">Oxidoreductase</keyword>
<keyword id="KW-1185">Reference proteome</keyword>
<keyword id="KW-0732">Signal</keyword>